<protein>
    <recommendedName>
        <fullName evidence="1">Small heat shock protein IbpB</fullName>
    </recommendedName>
    <alternativeName>
        <fullName evidence="1">16 kDa heat shock protein B</fullName>
    </alternativeName>
</protein>
<accession>B1JGZ6</accession>
<gene>
    <name evidence="1" type="primary">ibpB</name>
    <name type="ordered locus">YPK_0012</name>
</gene>
<comment type="function">
    <text evidence="1">Associates with aggregated proteins, together with IbpA, to stabilize and protect them from irreversible denaturation and extensive proteolysis during heat shock and oxidative stress. Aggregated proteins bound to the IbpAB complex are more efficiently refolded and reactivated by the ATP-dependent chaperone systems ClpB and DnaK/DnaJ/GrpE. Its activity is ATP-independent.</text>
</comment>
<comment type="subunit">
    <text evidence="1">Homodimer. Forms homomultimers of about 100-150 subunits at optimal growth temperatures. Conformation changes to oligomers at high temperatures or high ionic concentrations. The decrease in size of the multimers is accompanied by an increase in chaperone activity.</text>
</comment>
<comment type="subcellular location">
    <subcellularLocation>
        <location evidence="1">Cytoplasm</location>
    </subcellularLocation>
</comment>
<comment type="domain">
    <text evidence="1">The N- and C-terminal flexible termini are involved in oligomerization and in the binding of non-native substrate proteins, and are essential for chaperone activity.</text>
</comment>
<comment type="similarity">
    <text evidence="1 2">Belongs to the small heat shock protein (HSP20) family.</text>
</comment>
<dbReference type="EMBL" id="CP000950">
    <property type="protein sequence ID" value="ACA66326.1"/>
    <property type="molecule type" value="Genomic_DNA"/>
</dbReference>
<dbReference type="RefSeq" id="WP_002209635.1">
    <property type="nucleotide sequence ID" value="NZ_CP009792.1"/>
</dbReference>
<dbReference type="SMR" id="B1JGZ6"/>
<dbReference type="GeneID" id="57974634"/>
<dbReference type="KEGG" id="ypy:YPK_0012"/>
<dbReference type="PATRIC" id="fig|502800.11.peg.614"/>
<dbReference type="GO" id="GO:0005737">
    <property type="term" value="C:cytoplasm"/>
    <property type="evidence" value="ECO:0007669"/>
    <property type="project" value="UniProtKB-SubCell"/>
</dbReference>
<dbReference type="GO" id="GO:0050821">
    <property type="term" value="P:protein stabilization"/>
    <property type="evidence" value="ECO:0007669"/>
    <property type="project" value="UniProtKB-UniRule"/>
</dbReference>
<dbReference type="CDD" id="cd06470">
    <property type="entry name" value="ACD_IbpA-B_like"/>
    <property type="match status" value="1"/>
</dbReference>
<dbReference type="Gene3D" id="2.60.40.790">
    <property type="match status" value="1"/>
</dbReference>
<dbReference type="HAMAP" id="MF_02001">
    <property type="entry name" value="HSP20_IbpB"/>
    <property type="match status" value="1"/>
</dbReference>
<dbReference type="InterPro" id="IPR002068">
    <property type="entry name" value="A-crystallin/Hsp20_dom"/>
</dbReference>
<dbReference type="InterPro" id="IPR037913">
    <property type="entry name" value="ACD_IbpA/B"/>
</dbReference>
<dbReference type="InterPro" id="IPR008978">
    <property type="entry name" value="HSP20-like_chaperone"/>
</dbReference>
<dbReference type="InterPro" id="IPR022848">
    <property type="entry name" value="HSP20_IbpB"/>
</dbReference>
<dbReference type="NCBIfam" id="NF008618">
    <property type="entry name" value="PRK11597.1"/>
    <property type="match status" value="1"/>
</dbReference>
<dbReference type="PANTHER" id="PTHR47062">
    <property type="match status" value="1"/>
</dbReference>
<dbReference type="PANTHER" id="PTHR47062:SF2">
    <property type="entry name" value="SMALL HEAT SHOCK PROTEIN IBPB"/>
    <property type="match status" value="1"/>
</dbReference>
<dbReference type="Pfam" id="PF00011">
    <property type="entry name" value="HSP20"/>
    <property type="match status" value="1"/>
</dbReference>
<dbReference type="SUPFAM" id="SSF49764">
    <property type="entry name" value="HSP20-like chaperones"/>
    <property type="match status" value="1"/>
</dbReference>
<dbReference type="PROSITE" id="PS01031">
    <property type="entry name" value="SHSP"/>
    <property type="match status" value="1"/>
</dbReference>
<keyword id="KW-0143">Chaperone</keyword>
<keyword id="KW-0963">Cytoplasm</keyword>
<keyword id="KW-0346">Stress response</keyword>
<feature type="chain" id="PRO_1000189117" description="Small heat shock protein IbpB">
    <location>
        <begin position="1"/>
        <end position="154"/>
    </location>
</feature>
<feature type="domain" description="sHSP" evidence="2">
    <location>
        <begin position="26"/>
        <end position="137"/>
    </location>
</feature>
<evidence type="ECO:0000255" key="1">
    <source>
        <dbReference type="HAMAP-Rule" id="MF_02001"/>
    </source>
</evidence>
<evidence type="ECO:0000255" key="2">
    <source>
        <dbReference type="PROSITE-ProRule" id="PRU00285"/>
    </source>
</evidence>
<name>IBPB_YERPY</name>
<organism>
    <name type="scientific">Yersinia pseudotuberculosis serotype O:3 (strain YPIII)</name>
    <dbReference type="NCBI Taxonomy" id="502800"/>
    <lineage>
        <taxon>Bacteria</taxon>
        <taxon>Pseudomonadati</taxon>
        <taxon>Pseudomonadota</taxon>
        <taxon>Gammaproteobacteria</taxon>
        <taxon>Enterobacterales</taxon>
        <taxon>Yersiniaceae</taxon>
        <taxon>Yersinia</taxon>
    </lineage>
</organism>
<sequence>MRNYDLSPLLRQWIGFDKLASTMQGGQEPQGFPPYNIEKTDDNHYRISLALAGFKQSELDIEVEGPRLTVRGKPTPVEKQVEYLHQGLVRKEFSLTFTLAEHLNVDNAQFENGLLHIDLLRQVPEALQPQRIAIGSATPQERQVLESPEAPDQQ</sequence>
<proteinExistence type="inferred from homology"/>
<reference key="1">
    <citation type="submission" date="2008-02" db="EMBL/GenBank/DDBJ databases">
        <title>Complete sequence of Yersinia pseudotuberculosis YPIII.</title>
        <authorList>
            <consortium name="US DOE Joint Genome Institute"/>
            <person name="Copeland A."/>
            <person name="Lucas S."/>
            <person name="Lapidus A."/>
            <person name="Glavina del Rio T."/>
            <person name="Dalin E."/>
            <person name="Tice H."/>
            <person name="Bruce D."/>
            <person name="Goodwin L."/>
            <person name="Pitluck S."/>
            <person name="Munk A.C."/>
            <person name="Brettin T."/>
            <person name="Detter J.C."/>
            <person name="Han C."/>
            <person name="Tapia R."/>
            <person name="Schmutz J."/>
            <person name="Larimer F."/>
            <person name="Land M."/>
            <person name="Hauser L."/>
            <person name="Challacombe J.F."/>
            <person name="Green L."/>
            <person name="Lindler L.E."/>
            <person name="Nikolich M.P."/>
            <person name="Richardson P."/>
        </authorList>
    </citation>
    <scope>NUCLEOTIDE SEQUENCE [LARGE SCALE GENOMIC DNA]</scope>
    <source>
        <strain>YPIII</strain>
    </source>
</reference>